<name>COAX_MYCA9</name>
<organism>
    <name type="scientific">Mycobacteroides abscessus (strain ATCC 19977 / DSM 44196 / CCUG 20993 / CIP 104536 / JCM 13569 / NCTC 13031 / TMC 1543 / L948)</name>
    <name type="common">Mycobacterium abscessus</name>
    <dbReference type="NCBI Taxonomy" id="561007"/>
    <lineage>
        <taxon>Bacteria</taxon>
        <taxon>Bacillati</taxon>
        <taxon>Actinomycetota</taxon>
        <taxon>Actinomycetes</taxon>
        <taxon>Mycobacteriales</taxon>
        <taxon>Mycobacteriaceae</taxon>
        <taxon>Mycobacteroides</taxon>
        <taxon>Mycobacteroides abscessus</taxon>
    </lineage>
</organism>
<feature type="chain" id="PRO_1000140249" description="Type III pantothenate kinase">
    <location>
        <begin position="1"/>
        <end position="271"/>
    </location>
</feature>
<feature type="active site" description="Proton acceptor" evidence="1">
    <location>
        <position position="111"/>
    </location>
</feature>
<feature type="binding site" evidence="1">
    <location>
        <begin position="6"/>
        <end position="13"/>
    </location>
    <ligand>
        <name>ATP</name>
        <dbReference type="ChEBI" id="CHEBI:30616"/>
    </ligand>
</feature>
<feature type="binding site" evidence="1">
    <location>
        <begin position="109"/>
        <end position="112"/>
    </location>
    <ligand>
        <name>substrate</name>
    </ligand>
</feature>
<feature type="binding site" evidence="1">
    <location>
        <position position="131"/>
    </location>
    <ligand>
        <name>K(+)</name>
        <dbReference type="ChEBI" id="CHEBI:29103"/>
    </ligand>
</feature>
<feature type="binding site" evidence="1">
    <location>
        <position position="134"/>
    </location>
    <ligand>
        <name>ATP</name>
        <dbReference type="ChEBI" id="CHEBI:30616"/>
    </ligand>
</feature>
<feature type="binding site" evidence="1">
    <location>
        <position position="186"/>
    </location>
    <ligand>
        <name>substrate</name>
    </ligand>
</feature>
<proteinExistence type="inferred from homology"/>
<comment type="function">
    <text evidence="1">Catalyzes the phosphorylation of pantothenate (Pan), the first step in CoA biosynthesis.</text>
</comment>
<comment type="catalytic activity">
    <reaction evidence="1">
        <text>(R)-pantothenate + ATP = (R)-4'-phosphopantothenate + ADP + H(+)</text>
        <dbReference type="Rhea" id="RHEA:16373"/>
        <dbReference type="ChEBI" id="CHEBI:10986"/>
        <dbReference type="ChEBI" id="CHEBI:15378"/>
        <dbReference type="ChEBI" id="CHEBI:29032"/>
        <dbReference type="ChEBI" id="CHEBI:30616"/>
        <dbReference type="ChEBI" id="CHEBI:456216"/>
        <dbReference type="EC" id="2.7.1.33"/>
    </reaction>
</comment>
<comment type="cofactor">
    <cofactor evidence="1">
        <name>NH4(+)</name>
        <dbReference type="ChEBI" id="CHEBI:28938"/>
    </cofactor>
    <cofactor evidence="1">
        <name>K(+)</name>
        <dbReference type="ChEBI" id="CHEBI:29103"/>
    </cofactor>
    <text evidence="1">A monovalent cation. Ammonium or potassium.</text>
</comment>
<comment type="pathway">
    <text evidence="1">Cofactor biosynthesis; coenzyme A biosynthesis; CoA from (R)-pantothenate: step 1/5.</text>
</comment>
<comment type="subunit">
    <text evidence="1">Homodimer.</text>
</comment>
<comment type="subcellular location">
    <subcellularLocation>
        <location evidence="1">Cytoplasm</location>
    </subcellularLocation>
</comment>
<comment type="similarity">
    <text evidence="1">Belongs to the type III pantothenate kinase family.</text>
</comment>
<sequence length="271" mass="28894">MLLAIDVRNTHTVLGLVSGTGEHAKVVQHWRIRTEAEITADELALTIDGLIGDDSETLTGVAALSTVPSVLHEMRGMFDQYWSSVPQVLIEPGVRTGLPLLVDNPKEVGADRIVNCLAAHHRFGSACIVVDFGSSICVDVVSAKGEFLGGAIAPGVQVSSDAAAARSAALRRVELTRPRSVVGKNTVECMQSGAVFGFAGLVDGLVERVRRDIDGFGAAGVTVVATGHTAPLILPETHTVDRYEEHLTLDGLRLVYERNRADQRGKARATR</sequence>
<accession>B1MGV8</accession>
<keyword id="KW-0067">ATP-binding</keyword>
<keyword id="KW-0173">Coenzyme A biosynthesis</keyword>
<keyword id="KW-0963">Cytoplasm</keyword>
<keyword id="KW-0418">Kinase</keyword>
<keyword id="KW-0479">Metal-binding</keyword>
<keyword id="KW-0547">Nucleotide-binding</keyword>
<keyword id="KW-0630">Potassium</keyword>
<keyword id="KW-1185">Reference proteome</keyword>
<keyword id="KW-0808">Transferase</keyword>
<evidence type="ECO:0000255" key="1">
    <source>
        <dbReference type="HAMAP-Rule" id="MF_01274"/>
    </source>
</evidence>
<protein>
    <recommendedName>
        <fullName evidence="1">Type III pantothenate kinase</fullName>
        <ecNumber evidence="1">2.7.1.33</ecNumber>
    </recommendedName>
    <alternativeName>
        <fullName evidence="1">PanK-III</fullName>
    </alternativeName>
    <alternativeName>
        <fullName evidence="1">Pantothenic acid kinase</fullName>
    </alternativeName>
</protein>
<reference key="1">
    <citation type="journal article" date="2009" name="PLoS ONE">
        <title>Non mycobacterial virulence genes in the genome of the emerging pathogen Mycobacterium abscessus.</title>
        <authorList>
            <person name="Ripoll F."/>
            <person name="Pasek S."/>
            <person name="Schenowitz C."/>
            <person name="Dossat C."/>
            <person name="Barbe V."/>
            <person name="Rottman M."/>
            <person name="Macheras E."/>
            <person name="Heym B."/>
            <person name="Herrmann J.L."/>
            <person name="Daffe M."/>
            <person name="Brosch R."/>
            <person name="Risler J.L."/>
            <person name="Gaillard J.L."/>
        </authorList>
    </citation>
    <scope>NUCLEOTIDE SEQUENCE [LARGE SCALE GENOMIC DNA]</scope>
    <source>
        <strain>ATCC 19977 / DSM 44196 / CCUG 20993 / CIP 104536 / JCM 13569 / NCTC 13031 / TMC 1543 / L948</strain>
    </source>
</reference>
<dbReference type="EC" id="2.7.1.33" evidence="1"/>
<dbReference type="EMBL" id="CU458896">
    <property type="protein sequence ID" value="CAM60642.1"/>
    <property type="molecule type" value="Genomic_DNA"/>
</dbReference>
<dbReference type="RefSeq" id="WP_005065020.1">
    <property type="nucleotide sequence ID" value="NZ_MLCG01000009.1"/>
</dbReference>
<dbReference type="SMR" id="B1MGV8"/>
<dbReference type="GeneID" id="93377490"/>
<dbReference type="KEGG" id="mab:MAB_0543"/>
<dbReference type="UniPathway" id="UPA00241">
    <property type="reaction ID" value="UER00352"/>
</dbReference>
<dbReference type="Proteomes" id="UP000007137">
    <property type="component" value="Chromosome"/>
</dbReference>
<dbReference type="GO" id="GO:0005737">
    <property type="term" value="C:cytoplasm"/>
    <property type="evidence" value="ECO:0007669"/>
    <property type="project" value="UniProtKB-SubCell"/>
</dbReference>
<dbReference type="GO" id="GO:0005524">
    <property type="term" value="F:ATP binding"/>
    <property type="evidence" value="ECO:0007669"/>
    <property type="project" value="UniProtKB-UniRule"/>
</dbReference>
<dbReference type="GO" id="GO:0046872">
    <property type="term" value="F:metal ion binding"/>
    <property type="evidence" value="ECO:0007669"/>
    <property type="project" value="UniProtKB-KW"/>
</dbReference>
<dbReference type="GO" id="GO:0004594">
    <property type="term" value="F:pantothenate kinase activity"/>
    <property type="evidence" value="ECO:0007669"/>
    <property type="project" value="UniProtKB-UniRule"/>
</dbReference>
<dbReference type="GO" id="GO:0015937">
    <property type="term" value="P:coenzyme A biosynthetic process"/>
    <property type="evidence" value="ECO:0007669"/>
    <property type="project" value="UniProtKB-UniRule"/>
</dbReference>
<dbReference type="CDD" id="cd24015">
    <property type="entry name" value="ASKHA_NBD_PanK-III"/>
    <property type="match status" value="1"/>
</dbReference>
<dbReference type="Gene3D" id="3.30.420.40">
    <property type="match status" value="2"/>
</dbReference>
<dbReference type="HAMAP" id="MF_01274">
    <property type="entry name" value="Pantothen_kinase_3"/>
    <property type="match status" value="1"/>
</dbReference>
<dbReference type="InterPro" id="IPR043129">
    <property type="entry name" value="ATPase_NBD"/>
</dbReference>
<dbReference type="InterPro" id="IPR004619">
    <property type="entry name" value="Type_III_PanK"/>
</dbReference>
<dbReference type="NCBIfam" id="TIGR00671">
    <property type="entry name" value="baf"/>
    <property type="match status" value="1"/>
</dbReference>
<dbReference type="NCBIfam" id="NF009845">
    <property type="entry name" value="PRK13318.1-3"/>
    <property type="match status" value="1"/>
</dbReference>
<dbReference type="NCBIfam" id="NF009855">
    <property type="entry name" value="PRK13321.1"/>
    <property type="match status" value="1"/>
</dbReference>
<dbReference type="PANTHER" id="PTHR34265">
    <property type="entry name" value="TYPE III PANTOTHENATE KINASE"/>
    <property type="match status" value="1"/>
</dbReference>
<dbReference type="PANTHER" id="PTHR34265:SF1">
    <property type="entry name" value="TYPE III PANTOTHENATE KINASE"/>
    <property type="match status" value="1"/>
</dbReference>
<dbReference type="Pfam" id="PF03309">
    <property type="entry name" value="Pan_kinase"/>
    <property type="match status" value="1"/>
</dbReference>
<dbReference type="SUPFAM" id="SSF53067">
    <property type="entry name" value="Actin-like ATPase domain"/>
    <property type="match status" value="2"/>
</dbReference>
<gene>
    <name evidence="1" type="primary">coaX</name>
    <name type="ordered locus">MAB_0543</name>
</gene>